<geneLocation type="chloroplast"/>
<sequence length="180" mass="21065">MFPMLTGFISYGQQTIRAARYIGQGLIITLSHTNRLPITIHYPYEKSITSERFRGRIHFEFDKCIACEVCVRVCPIDLPLVDWKFEKDIKRKQLLNYSIDFGVCIFCGNCVEYCPTNCLSMTEEYELSTYDRHELNYNQIALSRLPISIMGDYTIQTIRNSPQSKIDEEKSWNSRTITDY</sequence>
<accession>Q6L3D6</accession>
<name>NDHI_SACHY</name>
<dbReference type="EC" id="7.1.1.-" evidence="1"/>
<dbReference type="EMBL" id="AE009947">
    <property type="protein sequence ID" value="AAT44657.1"/>
    <property type="molecule type" value="Genomic_DNA"/>
</dbReference>
<dbReference type="SMR" id="Q6L3D6"/>
<dbReference type="GO" id="GO:0009535">
    <property type="term" value="C:chloroplast thylakoid membrane"/>
    <property type="evidence" value="ECO:0007669"/>
    <property type="project" value="UniProtKB-SubCell"/>
</dbReference>
<dbReference type="GO" id="GO:0051539">
    <property type="term" value="F:4 iron, 4 sulfur cluster binding"/>
    <property type="evidence" value="ECO:0007669"/>
    <property type="project" value="UniProtKB-KW"/>
</dbReference>
<dbReference type="GO" id="GO:0005506">
    <property type="term" value="F:iron ion binding"/>
    <property type="evidence" value="ECO:0007669"/>
    <property type="project" value="UniProtKB-UniRule"/>
</dbReference>
<dbReference type="GO" id="GO:0008137">
    <property type="term" value="F:NADH dehydrogenase (ubiquinone) activity"/>
    <property type="evidence" value="ECO:0007669"/>
    <property type="project" value="InterPro"/>
</dbReference>
<dbReference type="GO" id="GO:0048038">
    <property type="term" value="F:quinone binding"/>
    <property type="evidence" value="ECO:0007669"/>
    <property type="project" value="UniProtKB-KW"/>
</dbReference>
<dbReference type="GO" id="GO:0019684">
    <property type="term" value="P:photosynthesis, light reaction"/>
    <property type="evidence" value="ECO:0007669"/>
    <property type="project" value="UniProtKB-UniRule"/>
</dbReference>
<dbReference type="Gene3D" id="3.30.70.3270">
    <property type="match status" value="1"/>
</dbReference>
<dbReference type="HAMAP" id="MF_01351">
    <property type="entry name" value="NDH1_NuoI"/>
    <property type="match status" value="1"/>
</dbReference>
<dbReference type="InterPro" id="IPR017896">
    <property type="entry name" value="4Fe4S_Fe-S-bd"/>
</dbReference>
<dbReference type="InterPro" id="IPR017900">
    <property type="entry name" value="4Fe4S_Fe_S_CS"/>
</dbReference>
<dbReference type="InterPro" id="IPR010226">
    <property type="entry name" value="NADH_quinone_OxRdtase_chainI"/>
</dbReference>
<dbReference type="InterPro" id="IPR004497">
    <property type="entry name" value="NDHI"/>
</dbReference>
<dbReference type="NCBIfam" id="TIGR00403">
    <property type="entry name" value="ndhI"/>
    <property type="match status" value="1"/>
</dbReference>
<dbReference type="NCBIfam" id="TIGR01971">
    <property type="entry name" value="NuoI"/>
    <property type="match status" value="1"/>
</dbReference>
<dbReference type="NCBIfam" id="NF004537">
    <property type="entry name" value="PRK05888.1-3"/>
    <property type="match status" value="1"/>
</dbReference>
<dbReference type="PANTHER" id="PTHR47275">
    <property type="entry name" value="NAD(P)H-QUINONE OXIDOREDUCTASE SUBUNIT I, CHLOROPLASTIC"/>
    <property type="match status" value="1"/>
</dbReference>
<dbReference type="PANTHER" id="PTHR47275:SF3">
    <property type="entry name" value="NAD(P)H-QUINONE OXIDOREDUCTASE SUBUNIT I, CHLOROPLASTIC"/>
    <property type="match status" value="1"/>
</dbReference>
<dbReference type="Pfam" id="PF13237">
    <property type="entry name" value="Fer4_10"/>
    <property type="match status" value="1"/>
</dbReference>
<dbReference type="SUPFAM" id="SSF54862">
    <property type="entry name" value="4Fe-4S ferredoxins"/>
    <property type="match status" value="1"/>
</dbReference>
<dbReference type="PROSITE" id="PS00198">
    <property type="entry name" value="4FE4S_FER_1"/>
    <property type="match status" value="2"/>
</dbReference>
<dbReference type="PROSITE" id="PS51379">
    <property type="entry name" value="4FE4S_FER_2"/>
    <property type="match status" value="2"/>
</dbReference>
<organism>
    <name type="scientific">Saccharum hybrid</name>
    <name type="common">Sugarcane</name>
    <dbReference type="NCBI Taxonomy" id="15819"/>
    <lineage>
        <taxon>Eukaryota</taxon>
        <taxon>Viridiplantae</taxon>
        <taxon>Streptophyta</taxon>
        <taxon>Embryophyta</taxon>
        <taxon>Tracheophyta</taxon>
        <taxon>Spermatophyta</taxon>
        <taxon>Magnoliopsida</taxon>
        <taxon>Liliopsida</taxon>
        <taxon>Poales</taxon>
        <taxon>Poaceae</taxon>
        <taxon>PACMAD clade</taxon>
        <taxon>Panicoideae</taxon>
        <taxon>Andropogonodae</taxon>
        <taxon>Andropogoneae</taxon>
        <taxon>Saccharinae</taxon>
        <taxon>Saccharum</taxon>
    </lineage>
</organism>
<comment type="function">
    <text evidence="1">NDH shuttles electrons from NAD(P)H:plastoquinone, via FMN and iron-sulfur (Fe-S) centers, to quinones in the photosynthetic chain and possibly in a chloroplast respiratory chain. The immediate electron acceptor for the enzyme in this species is believed to be plastoquinone. Couples the redox reaction to proton translocation, and thus conserves the redox energy in a proton gradient.</text>
</comment>
<comment type="catalytic activity">
    <reaction evidence="1">
        <text>a plastoquinone + NADH + (n+1) H(+)(in) = a plastoquinol + NAD(+) + n H(+)(out)</text>
        <dbReference type="Rhea" id="RHEA:42608"/>
        <dbReference type="Rhea" id="RHEA-COMP:9561"/>
        <dbReference type="Rhea" id="RHEA-COMP:9562"/>
        <dbReference type="ChEBI" id="CHEBI:15378"/>
        <dbReference type="ChEBI" id="CHEBI:17757"/>
        <dbReference type="ChEBI" id="CHEBI:57540"/>
        <dbReference type="ChEBI" id="CHEBI:57945"/>
        <dbReference type="ChEBI" id="CHEBI:62192"/>
    </reaction>
</comment>
<comment type="catalytic activity">
    <reaction evidence="1">
        <text>a plastoquinone + NADPH + (n+1) H(+)(in) = a plastoquinol + NADP(+) + n H(+)(out)</text>
        <dbReference type="Rhea" id="RHEA:42612"/>
        <dbReference type="Rhea" id="RHEA-COMP:9561"/>
        <dbReference type="Rhea" id="RHEA-COMP:9562"/>
        <dbReference type="ChEBI" id="CHEBI:15378"/>
        <dbReference type="ChEBI" id="CHEBI:17757"/>
        <dbReference type="ChEBI" id="CHEBI:57783"/>
        <dbReference type="ChEBI" id="CHEBI:58349"/>
        <dbReference type="ChEBI" id="CHEBI:62192"/>
    </reaction>
</comment>
<comment type="cofactor">
    <cofactor evidence="1">
        <name>[4Fe-4S] cluster</name>
        <dbReference type="ChEBI" id="CHEBI:49883"/>
    </cofactor>
    <text evidence="1">Binds 2 [4Fe-4S] clusters per subunit.</text>
</comment>
<comment type="subunit">
    <text evidence="1">NDH is composed of at least 16 different subunits, 5 of which are encoded in the nucleus.</text>
</comment>
<comment type="subcellular location">
    <subcellularLocation>
        <location evidence="1">Plastid</location>
        <location evidence="1">Chloroplast thylakoid membrane</location>
        <topology evidence="1">Peripheral membrane protein</topology>
    </subcellularLocation>
</comment>
<comment type="similarity">
    <text evidence="1">Belongs to the complex I 23 kDa subunit family.</text>
</comment>
<evidence type="ECO:0000255" key="1">
    <source>
        <dbReference type="HAMAP-Rule" id="MF_01351"/>
    </source>
</evidence>
<gene>
    <name evidence="1" type="primary">ndhI</name>
    <name type="ordered locus">PS046</name>
</gene>
<protein>
    <recommendedName>
        <fullName evidence="1">NAD(P)H-quinone oxidoreductase subunit I, chloroplastic</fullName>
        <ecNumber evidence="1">7.1.1.-</ecNumber>
    </recommendedName>
    <alternativeName>
        <fullName evidence="1">NAD(P)H dehydrogenase subunit I</fullName>
        <shortName evidence="1">NDH subunit I</shortName>
    </alternativeName>
    <alternativeName>
        <fullName evidence="1">NADH-plastoquinone oxidoreductase subunit I</fullName>
    </alternativeName>
</protein>
<keyword id="KW-0004">4Fe-4S</keyword>
<keyword id="KW-0150">Chloroplast</keyword>
<keyword id="KW-0408">Iron</keyword>
<keyword id="KW-0411">Iron-sulfur</keyword>
<keyword id="KW-0472">Membrane</keyword>
<keyword id="KW-0479">Metal-binding</keyword>
<keyword id="KW-0520">NAD</keyword>
<keyword id="KW-0521">NADP</keyword>
<keyword id="KW-0934">Plastid</keyword>
<keyword id="KW-0618">Plastoquinone</keyword>
<keyword id="KW-0874">Quinone</keyword>
<keyword id="KW-0677">Repeat</keyword>
<keyword id="KW-0793">Thylakoid</keyword>
<keyword id="KW-1278">Translocase</keyword>
<reference key="1">
    <citation type="journal article" date="2004" name="Curr. Genet.">
        <title>Structural features and transcript-editing analysis of sugarcane (Saccharum officinarum L.) chloroplast genome.</title>
        <authorList>
            <person name="Calsa T. Jr."/>
            <person name="Carraro D.M."/>
            <person name="Benatti M.R."/>
            <person name="Barbosa A.C."/>
            <person name="Kitajima J.P."/>
            <person name="Carrer H."/>
        </authorList>
    </citation>
    <scope>NUCLEOTIDE SEQUENCE [LARGE SCALE GENOMIC DNA]</scope>
    <source>
        <strain>cv. SP-80-3280</strain>
    </source>
</reference>
<proteinExistence type="inferred from homology"/>
<feature type="chain" id="PRO_0000226916" description="NAD(P)H-quinone oxidoreductase subunit I, chloroplastic">
    <location>
        <begin position="1"/>
        <end position="180"/>
    </location>
</feature>
<feature type="domain" description="4Fe-4S ferredoxin-type 1" evidence="1">
    <location>
        <begin position="55"/>
        <end position="84"/>
    </location>
</feature>
<feature type="domain" description="4Fe-4S ferredoxin-type 2" evidence="1">
    <location>
        <begin position="95"/>
        <end position="124"/>
    </location>
</feature>
<feature type="binding site" evidence="1">
    <location>
        <position position="64"/>
    </location>
    <ligand>
        <name>[4Fe-4S] cluster</name>
        <dbReference type="ChEBI" id="CHEBI:49883"/>
        <label>1</label>
    </ligand>
</feature>
<feature type="binding site" evidence="1">
    <location>
        <position position="67"/>
    </location>
    <ligand>
        <name>[4Fe-4S] cluster</name>
        <dbReference type="ChEBI" id="CHEBI:49883"/>
        <label>1</label>
    </ligand>
</feature>
<feature type="binding site" evidence="1">
    <location>
        <position position="70"/>
    </location>
    <ligand>
        <name>[4Fe-4S] cluster</name>
        <dbReference type="ChEBI" id="CHEBI:49883"/>
        <label>1</label>
    </ligand>
</feature>
<feature type="binding site" evidence="1">
    <location>
        <position position="74"/>
    </location>
    <ligand>
        <name>[4Fe-4S] cluster</name>
        <dbReference type="ChEBI" id="CHEBI:49883"/>
        <label>2</label>
    </ligand>
</feature>
<feature type="binding site" evidence="1">
    <location>
        <position position="104"/>
    </location>
    <ligand>
        <name>[4Fe-4S] cluster</name>
        <dbReference type="ChEBI" id="CHEBI:49883"/>
        <label>2</label>
    </ligand>
</feature>
<feature type="binding site" evidence="1">
    <location>
        <position position="107"/>
    </location>
    <ligand>
        <name>[4Fe-4S] cluster</name>
        <dbReference type="ChEBI" id="CHEBI:49883"/>
        <label>2</label>
    </ligand>
</feature>
<feature type="binding site" evidence="1">
    <location>
        <position position="110"/>
    </location>
    <ligand>
        <name>[4Fe-4S] cluster</name>
        <dbReference type="ChEBI" id="CHEBI:49883"/>
        <label>2</label>
    </ligand>
</feature>
<feature type="binding site" evidence="1">
    <location>
        <position position="114"/>
    </location>
    <ligand>
        <name>[4Fe-4S] cluster</name>
        <dbReference type="ChEBI" id="CHEBI:49883"/>
        <label>1</label>
    </ligand>
</feature>